<reference key="1">
    <citation type="journal article" date="2005" name="Proc. Natl. Acad. Sci. U.S.A.">
        <title>Whole genome sequence of Staphylococcus saprophyticus reveals the pathogenesis of uncomplicated urinary tract infection.</title>
        <authorList>
            <person name="Kuroda M."/>
            <person name="Yamashita A."/>
            <person name="Hirakawa H."/>
            <person name="Kumano M."/>
            <person name="Morikawa K."/>
            <person name="Higashide M."/>
            <person name="Maruyama A."/>
            <person name="Inose Y."/>
            <person name="Matoba K."/>
            <person name="Toh H."/>
            <person name="Kuhara S."/>
            <person name="Hattori M."/>
            <person name="Ohta T."/>
        </authorList>
    </citation>
    <scope>NUCLEOTIDE SEQUENCE [LARGE SCALE GENOMIC DNA]</scope>
    <source>
        <strain>ATCC 15305 / DSM 20229 / NCIMB 8711 / NCTC 7292 / S-41</strain>
    </source>
</reference>
<sequence length="129" mass="14443">MYKTGILNSDISKLLSDLGHTDEIMIADCGLPIPNGVKKIDLALDFGKPSFLDVFHIVKSHMAIEKMTLASEMKTENESLYNVLKEEEIKFTTESHELLKQHSKHVKAIIRTGEAKPYANVILASDVLF</sequence>
<feature type="chain" id="PRO_0000346278" description="D-ribose pyranase">
    <location>
        <begin position="1"/>
        <end position="129"/>
    </location>
</feature>
<feature type="active site" description="Proton donor" evidence="1">
    <location>
        <position position="20"/>
    </location>
</feature>
<feature type="binding site" evidence="1">
    <location>
        <position position="28"/>
    </location>
    <ligand>
        <name>substrate</name>
    </ligand>
</feature>
<feature type="binding site" evidence="1">
    <location>
        <position position="96"/>
    </location>
    <ligand>
        <name>substrate</name>
    </ligand>
</feature>
<feature type="binding site" evidence="1">
    <location>
        <begin position="118"/>
        <end position="120"/>
    </location>
    <ligand>
        <name>substrate</name>
    </ligand>
</feature>
<protein>
    <recommendedName>
        <fullName evidence="1">D-ribose pyranase</fullName>
        <ecNumber evidence="1">5.4.99.62</ecNumber>
    </recommendedName>
</protein>
<keyword id="KW-0119">Carbohydrate metabolism</keyword>
<keyword id="KW-0963">Cytoplasm</keyword>
<keyword id="KW-0413">Isomerase</keyword>
<keyword id="KW-1185">Reference proteome</keyword>
<evidence type="ECO:0000255" key="1">
    <source>
        <dbReference type="HAMAP-Rule" id="MF_01661"/>
    </source>
</evidence>
<dbReference type="EC" id="5.4.99.62" evidence="1"/>
<dbReference type="EMBL" id="AP008934">
    <property type="protein sequence ID" value="BAE18540.1"/>
    <property type="molecule type" value="Genomic_DNA"/>
</dbReference>
<dbReference type="RefSeq" id="WP_011303169.1">
    <property type="nucleotide sequence ID" value="NZ_MTGA01000038.1"/>
</dbReference>
<dbReference type="SMR" id="Q49XF7"/>
<dbReference type="GeneID" id="3617123"/>
<dbReference type="KEGG" id="ssp:SSP1395"/>
<dbReference type="PATRIC" id="fig|342451.11.peg.1397"/>
<dbReference type="eggNOG" id="COG1869">
    <property type="taxonomic scope" value="Bacteria"/>
</dbReference>
<dbReference type="HOGENOM" id="CLU_135498_0_0_9"/>
<dbReference type="OrthoDB" id="9805009at2"/>
<dbReference type="UniPathway" id="UPA00916">
    <property type="reaction ID" value="UER00888"/>
</dbReference>
<dbReference type="Proteomes" id="UP000006371">
    <property type="component" value="Chromosome"/>
</dbReference>
<dbReference type="GO" id="GO:0005829">
    <property type="term" value="C:cytosol"/>
    <property type="evidence" value="ECO:0007669"/>
    <property type="project" value="TreeGrafter"/>
</dbReference>
<dbReference type="GO" id="GO:0062193">
    <property type="term" value="F:D-ribose pyranase activity"/>
    <property type="evidence" value="ECO:0007669"/>
    <property type="project" value="UniProtKB-EC"/>
</dbReference>
<dbReference type="GO" id="GO:0016872">
    <property type="term" value="F:intramolecular lyase activity"/>
    <property type="evidence" value="ECO:0007669"/>
    <property type="project" value="UniProtKB-UniRule"/>
</dbReference>
<dbReference type="GO" id="GO:0048029">
    <property type="term" value="F:monosaccharide binding"/>
    <property type="evidence" value="ECO:0007669"/>
    <property type="project" value="InterPro"/>
</dbReference>
<dbReference type="GO" id="GO:0019303">
    <property type="term" value="P:D-ribose catabolic process"/>
    <property type="evidence" value="ECO:0007669"/>
    <property type="project" value="UniProtKB-UniRule"/>
</dbReference>
<dbReference type="Gene3D" id="3.40.1650.10">
    <property type="entry name" value="RbsD-like domain"/>
    <property type="match status" value="1"/>
</dbReference>
<dbReference type="HAMAP" id="MF_01661">
    <property type="entry name" value="D_rib_pyranase"/>
    <property type="match status" value="1"/>
</dbReference>
<dbReference type="InterPro" id="IPR023064">
    <property type="entry name" value="D-ribose_pyranase"/>
</dbReference>
<dbReference type="InterPro" id="IPR023750">
    <property type="entry name" value="RbsD-like_sf"/>
</dbReference>
<dbReference type="InterPro" id="IPR007721">
    <property type="entry name" value="RbsD_FucU"/>
</dbReference>
<dbReference type="NCBIfam" id="NF008761">
    <property type="entry name" value="PRK11797.1"/>
    <property type="match status" value="1"/>
</dbReference>
<dbReference type="PANTHER" id="PTHR37831">
    <property type="entry name" value="D-RIBOSE PYRANASE"/>
    <property type="match status" value="1"/>
</dbReference>
<dbReference type="PANTHER" id="PTHR37831:SF1">
    <property type="entry name" value="D-RIBOSE PYRANASE"/>
    <property type="match status" value="1"/>
</dbReference>
<dbReference type="Pfam" id="PF05025">
    <property type="entry name" value="RbsD_FucU"/>
    <property type="match status" value="1"/>
</dbReference>
<dbReference type="SUPFAM" id="SSF102546">
    <property type="entry name" value="RbsD-like"/>
    <property type="match status" value="1"/>
</dbReference>
<proteinExistence type="inferred from homology"/>
<name>RBSD_STAS1</name>
<organism>
    <name type="scientific">Staphylococcus saprophyticus subsp. saprophyticus (strain ATCC 15305 / DSM 20229 / NCIMB 8711 / NCTC 7292 / S-41)</name>
    <dbReference type="NCBI Taxonomy" id="342451"/>
    <lineage>
        <taxon>Bacteria</taxon>
        <taxon>Bacillati</taxon>
        <taxon>Bacillota</taxon>
        <taxon>Bacilli</taxon>
        <taxon>Bacillales</taxon>
        <taxon>Staphylococcaceae</taxon>
        <taxon>Staphylococcus</taxon>
    </lineage>
</organism>
<gene>
    <name evidence="1" type="primary">rbsD</name>
    <name type="ordered locus">SSP1395</name>
</gene>
<comment type="function">
    <text evidence="1">Catalyzes the interconversion of beta-pyran and beta-furan forms of D-ribose.</text>
</comment>
<comment type="catalytic activity">
    <reaction evidence="1">
        <text>beta-D-ribopyranose = beta-D-ribofuranose</text>
        <dbReference type="Rhea" id="RHEA:25432"/>
        <dbReference type="ChEBI" id="CHEBI:27476"/>
        <dbReference type="ChEBI" id="CHEBI:47002"/>
        <dbReference type="EC" id="5.4.99.62"/>
    </reaction>
</comment>
<comment type="pathway">
    <text evidence="1">Carbohydrate metabolism; D-ribose degradation; D-ribose 5-phosphate from beta-D-ribopyranose: step 1/2.</text>
</comment>
<comment type="subunit">
    <text evidence="1">Homodecamer.</text>
</comment>
<comment type="subcellular location">
    <subcellularLocation>
        <location evidence="1">Cytoplasm</location>
    </subcellularLocation>
</comment>
<comment type="similarity">
    <text evidence="1">Belongs to the RbsD / FucU family. RbsD subfamily.</text>
</comment>
<accession>Q49XF7</accession>